<dbReference type="EMBL" id="CP000471">
    <property type="protein sequence ID" value="ABK42891.1"/>
    <property type="molecule type" value="Genomic_DNA"/>
</dbReference>
<dbReference type="RefSeq" id="WP_011712061.1">
    <property type="nucleotide sequence ID" value="NC_008576.1"/>
</dbReference>
<dbReference type="SMR" id="A0L4J8"/>
<dbReference type="STRING" id="156889.Mmc1_0365"/>
<dbReference type="KEGG" id="mgm:Mmc1_0365"/>
<dbReference type="eggNOG" id="COG0291">
    <property type="taxonomic scope" value="Bacteria"/>
</dbReference>
<dbReference type="HOGENOM" id="CLU_169643_1_1_5"/>
<dbReference type="OrthoDB" id="9804851at2"/>
<dbReference type="Proteomes" id="UP000002586">
    <property type="component" value="Chromosome"/>
</dbReference>
<dbReference type="GO" id="GO:0022625">
    <property type="term" value="C:cytosolic large ribosomal subunit"/>
    <property type="evidence" value="ECO:0007669"/>
    <property type="project" value="TreeGrafter"/>
</dbReference>
<dbReference type="GO" id="GO:0003735">
    <property type="term" value="F:structural constituent of ribosome"/>
    <property type="evidence" value="ECO:0007669"/>
    <property type="project" value="InterPro"/>
</dbReference>
<dbReference type="GO" id="GO:0006412">
    <property type="term" value="P:translation"/>
    <property type="evidence" value="ECO:0007669"/>
    <property type="project" value="UniProtKB-UniRule"/>
</dbReference>
<dbReference type="FunFam" id="4.10.410.60:FF:000001">
    <property type="entry name" value="50S ribosomal protein L35"/>
    <property type="match status" value="1"/>
</dbReference>
<dbReference type="Gene3D" id="4.10.410.60">
    <property type="match status" value="1"/>
</dbReference>
<dbReference type="HAMAP" id="MF_00514">
    <property type="entry name" value="Ribosomal_bL35"/>
    <property type="match status" value="1"/>
</dbReference>
<dbReference type="InterPro" id="IPR001706">
    <property type="entry name" value="Ribosomal_bL35"/>
</dbReference>
<dbReference type="InterPro" id="IPR021137">
    <property type="entry name" value="Ribosomal_bL35-like"/>
</dbReference>
<dbReference type="InterPro" id="IPR018265">
    <property type="entry name" value="Ribosomal_bL35_CS"/>
</dbReference>
<dbReference type="InterPro" id="IPR037229">
    <property type="entry name" value="Ribosomal_bL35_sf"/>
</dbReference>
<dbReference type="NCBIfam" id="TIGR00001">
    <property type="entry name" value="rpmI_bact"/>
    <property type="match status" value="1"/>
</dbReference>
<dbReference type="PANTHER" id="PTHR33343">
    <property type="entry name" value="54S RIBOSOMAL PROTEIN BL35M"/>
    <property type="match status" value="1"/>
</dbReference>
<dbReference type="PANTHER" id="PTHR33343:SF1">
    <property type="entry name" value="LARGE RIBOSOMAL SUBUNIT PROTEIN BL35M"/>
    <property type="match status" value="1"/>
</dbReference>
<dbReference type="Pfam" id="PF01632">
    <property type="entry name" value="Ribosomal_L35p"/>
    <property type="match status" value="1"/>
</dbReference>
<dbReference type="PRINTS" id="PR00064">
    <property type="entry name" value="RIBOSOMALL35"/>
</dbReference>
<dbReference type="SUPFAM" id="SSF143034">
    <property type="entry name" value="L35p-like"/>
    <property type="match status" value="1"/>
</dbReference>
<dbReference type="PROSITE" id="PS00936">
    <property type="entry name" value="RIBOSOMAL_L35"/>
    <property type="match status" value="1"/>
</dbReference>
<sequence length="65" mass="7430">MPKLKTHRGAAKRFKVTGSGKIRRNKAFKSHILTKKSAKRKRGFRAGDLVHERDVAGVRKMLPYL</sequence>
<evidence type="ECO:0000255" key="1">
    <source>
        <dbReference type="HAMAP-Rule" id="MF_00514"/>
    </source>
</evidence>
<evidence type="ECO:0000305" key="2"/>
<organism>
    <name type="scientific">Magnetococcus marinus (strain ATCC BAA-1437 / JCM 17883 / MC-1)</name>
    <dbReference type="NCBI Taxonomy" id="156889"/>
    <lineage>
        <taxon>Bacteria</taxon>
        <taxon>Pseudomonadati</taxon>
        <taxon>Pseudomonadota</taxon>
        <taxon>Alphaproteobacteria</taxon>
        <taxon>Magnetococcales</taxon>
        <taxon>Magnetococcaceae</taxon>
        <taxon>Magnetococcus</taxon>
    </lineage>
</organism>
<name>RL35_MAGMM</name>
<feature type="chain" id="PRO_1000050713" description="Large ribosomal subunit protein bL35">
    <location>
        <begin position="1"/>
        <end position="65"/>
    </location>
</feature>
<reference key="1">
    <citation type="journal article" date="2009" name="Appl. Environ. Microbiol.">
        <title>Complete genome sequence of the chemolithoautotrophic marine magnetotactic coccus strain MC-1.</title>
        <authorList>
            <person name="Schubbe S."/>
            <person name="Williams T.J."/>
            <person name="Xie G."/>
            <person name="Kiss H.E."/>
            <person name="Brettin T.S."/>
            <person name="Martinez D."/>
            <person name="Ross C.A."/>
            <person name="Schuler D."/>
            <person name="Cox B.L."/>
            <person name="Nealson K.H."/>
            <person name="Bazylinski D.A."/>
        </authorList>
    </citation>
    <scope>NUCLEOTIDE SEQUENCE [LARGE SCALE GENOMIC DNA]</scope>
    <source>
        <strain>ATCC BAA-1437 / JCM 17883 / MC-1</strain>
    </source>
</reference>
<protein>
    <recommendedName>
        <fullName evidence="1">Large ribosomal subunit protein bL35</fullName>
    </recommendedName>
    <alternativeName>
        <fullName evidence="2">50S ribosomal protein L35</fullName>
    </alternativeName>
</protein>
<keyword id="KW-1185">Reference proteome</keyword>
<keyword id="KW-0687">Ribonucleoprotein</keyword>
<keyword id="KW-0689">Ribosomal protein</keyword>
<accession>A0L4J8</accession>
<gene>
    <name evidence="1" type="primary">rpmI</name>
    <name type="ordered locus">Mmc1_0365</name>
</gene>
<comment type="similarity">
    <text evidence="1">Belongs to the bacterial ribosomal protein bL35 family.</text>
</comment>
<proteinExistence type="inferred from homology"/>